<name>RECF_ECO7I</name>
<comment type="function">
    <text evidence="1">The RecF protein is involved in DNA metabolism; it is required for DNA replication and normal SOS inducibility. RecF binds preferentially to single-stranded, linear DNA. It also seems to bind ATP.</text>
</comment>
<comment type="subcellular location">
    <subcellularLocation>
        <location evidence="1">Cytoplasm</location>
    </subcellularLocation>
</comment>
<comment type="similarity">
    <text evidence="1">Belongs to the RecF family.</text>
</comment>
<dbReference type="EMBL" id="CU928164">
    <property type="protein sequence ID" value="CAR20410.1"/>
    <property type="molecule type" value="Genomic_DNA"/>
</dbReference>
<dbReference type="RefSeq" id="WP_000060114.1">
    <property type="nucleotide sequence ID" value="NC_011750.1"/>
</dbReference>
<dbReference type="RefSeq" id="YP_002410178.1">
    <property type="nucleotide sequence ID" value="NC_011750.1"/>
</dbReference>
<dbReference type="SMR" id="B7NR02"/>
<dbReference type="STRING" id="585057.ECIAI39_4304"/>
<dbReference type="KEGG" id="ect:ECIAI39_4304"/>
<dbReference type="PATRIC" id="fig|585057.6.peg.4450"/>
<dbReference type="HOGENOM" id="CLU_040267_0_0_6"/>
<dbReference type="Proteomes" id="UP000000749">
    <property type="component" value="Chromosome"/>
</dbReference>
<dbReference type="GO" id="GO:0005737">
    <property type="term" value="C:cytoplasm"/>
    <property type="evidence" value="ECO:0007669"/>
    <property type="project" value="UniProtKB-SubCell"/>
</dbReference>
<dbReference type="GO" id="GO:0005524">
    <property type="term" value="F:ATP binding"/>
    <property type="evidence" value="ECO:0007669"/>
    <property type="project" value="UniProtKB-UniRule"/>
</dbReference>
<dbReference type="GO" id="GO:0003697">
    <property type="term" value="F:single-stranded DNA binding"/>
    <property type="evidence" value="ECO:0007669"/>
    <property type="project" value="UniProtKB-UniRule"/>
</dbReference>
<dbReference type="GO" id="GO:0006260">
    <property type="term" value="P:DNA replication"/>
    <property type="evidence" value="ECO:0007669"/>
    <property type="project" value="UniProtKB-UniRule"/>
</dbReference>
<dbReference type="GO" id="GO:0000731">
    <property type="term" value="P:DNA synthesis involved in DNA repair"/>
    <property type="evidence" value="ECO:0007669"/>
    <property type="project" value="TreeGrafter"/>
</dbReference>
<dbReference type="GO" id="GO:0006302">
    <property type="term" value="P:double-strand break repair"/>
    <property type="evidence" value="ECO:0007669"/>
    <property type="project" value="TreeGrafter"/>
</dbReference>
<dbReference type="GO" id="GO:0009432">
    <property type="term" value="P:SOS response"/>
    <property type="evidence" value="ECO:0007669"/>
    <property type="project" value="UniProtKB-UniRule"/>
</dbReference>
<dbReference type="FunFam" id="1.20.1050.90:FF:000001">
    <property type="entry name" value="DNA replication and repair protein RecF"/>
    <property type="match status" value="1"/>
</dbReference>
<dbReference type="Gene3D" id="3.40.50.300">
    <property type="entry name" value="P-loop containing nucleotide triphosphate hydrolases"/>
    <property type="match status" value="1"/>
</dbReference>
<dbReference type="Gene3D" id="1.20.1050.90">
    <property type="entry name" value="RecF/RecN/SMC, N-terminal domain"/>
    <property type="match status" value="1"/>
</dbReference>
<dbReference type="HAMAP" id="MF_00365">
    <property type="entry name" value="RecF"/>
    <property type="match status" value="1"/>
</dbReference>
<dbReference type="InterPro" id="IPR001238">
    <property type="entry name" value="DNA-binding_RecF"/>
</dbReference>
<dbReference type="InterPro" id="IPR018078">
    <property type="entry name" value="DNA-binding_RecF_CS"/>
</dbReference>
<dbReference type="InterPro" id="IPR027417">
    <property type="entry name" value="P-loop_NTPase"/>
</dbReference>
<dbReference type="InterPro" id="IPR003395">
    <property type="entry name" value="RecF/RecN/SMC_N"/>
</dbReference>
<dbReference type="InterPro" id="IPR042174">
    <property type="entry name" value="RecF_2"/>
</dbReference>
<dbReference type="NCBIfam" id="TIGR00611">
    <property type="entry name" value="recf"/>
    <property type="match status" value="1"/>
</dbReference>
<dbReference type="PANTHER" id="PTHR32182">
    <property type="entry name" value="DNA REPLICATION AND REPAIR PROTEIN RECF"/>
    <property type="match status" value="1"/>
</dbReference>
<dbReference type="PANTHER" id="PTHR32182:SF0">
    <property type="entry name" value="DNA REPLICATION AND REPAIR PROTEIN RECF"/>
    <property type="match status" value="1"/>
</dbReference>
<dbReference type="Pfam" id="PF02463">
    <property type="entry name" value="SMC_N"/>
    <property type="match status" value="1"/>
</dbReference>
<dbReference type="SUPFAM" id="SSF52540">
    <property type="entry name" value="P-loop containing nucleoside triphosphate hydrolases"/>
    <property type="match status" value="1"/>
</dbReference>
<dbReference type="PROSITE" id="PS00617">
    <property type="entry name" value="RECF_1"/>
    <property type="match status" value="1"/>
</dbReference>
<dbReference type="PROSITE" id="PS00618">
    <property type="entry name" value="RECF_2"/>
    <property type="match status" value="1"/>
</dbReference>
<evidence type="ECO:0000255" key="1">
    <source>
        <dbReference type="HAMAP-Rule" id="MF_00365"/>
    </source>
</evidence>
<reference key="1">
    <citation type="journal article" date="2009" name="PLoS Genet.">
        <title>Organised genome dynamics in the Escherichia coli species results in highly diverse adaptive paths.</title>
        <authorList>
            <person name="Touchon M."/>
            <person name="Hoede C."/>
            <person name="Tenaillon O."/>
            <person name="Barbe V."/>
            <person name="Baeriswyl S."/>
            <person name="Bidet P."/>
            <person name="Bingen E."/>
            <person name="Bonacorsi S."/>
            <person name="Bouchier C."/>
            <person name="Bouvet O."/>
            <person name="Calteau A."/>
            <person name="Chiapello H."/>
            <person name="Clermont O."/>
            <person name="Cruveiller S."/>
            <person name="Danchin A."/>
            <person name="Diard M."/>
            <person name="Dossat C."/>
            <person name="Karoui M.E."/>
            <person name="Frapy E."/>
            <person name="Garry L."/>
            <person name="Ghigo J.M."/>
            <person name="Gilles A.M."/>
            <person name="Johnson J."/>
            <person name="Le Bouguenec C."/>
            <person name="Lescat M."/>
            <person name="Mangenot S."/>
            <person name="Martinez-Jehanne V."/>
            <person name="Matic I."/>
            <person name="Nassif X."/>
            <person name="Oztas S."/>
            <person name="Petit M.A."/>
            <person name="Pichon C."/>
            <person name="Rouy Z."/>
            <person name="Ruf C.S."/>
            <person name="Schneider D."/>
            <person name="Tourret J."/>
            <person name="Vacherie B."/>
            <person name="Vallenet D."/>
            <person name="Medigue C."/>
            <person name="Rocha E.P.C."/>
            <person name="Denamur E."/>
        </authorList>
    </citation>
    <scope>NUCLEOTIDE SEQUENCE [LARGE SCALE GENOMIC DNA]</scope>
    <source>
        <strain>IAI39 / ExPEC</strain>
    </source>
</reference>
<sequence>MSLTRLLIRDFRNIETADLALSPGFNFLVGANGSGKTSVLEAIYTLGHGRAFRSLQIGRVIRHEQEAFVLHGRLQGEERETAIGLTKDKQGDSKVRIDGTDGHKVAELAHLMPMQLITPEGFTLLNGGPKYRRAFLDWGCFHNEPGFFTAWSNLKRLLKQRNAALRQVTRYEQLRPWDKELIPLAEQISTWRAEYSAGIAADMADTCKQFLPEFTLTFSFQRGWEKETEYAEVLERNFERDRQLTYTAHGPHKADLRIRADGAPVEDTLSRGQLKLLMCALRLAQGEFLTRESGRRCLYLIDDFASELDDERRGLLASRLKATQSQVFVSAISAEHVIDMSDENSKMFTVEKGKITD</sequence>
<protein>
    <recommendedName>
        <fullName evidence="1">DNA replication and repair protein RecF</fullName>
    </recommendedName>
</protein>
<accession>B7NR02</accession>
<organism>
    <name type="scientific">Escherichia coli O7:K1 (strain IAI39 / ExPEC)</name>
    <dbReference type="NCBI Taxonomy" id="585057"/>
    <lineage>
        <taxon>Bacteria</taxon>
        <taxon>Pseudomonadati</taxon>
        <taxon>Pseudomonadota</taxon>
        <taxon>Gammaproteobacteria</taxon>
        <taxon>Enterobacterales</taxon>
        <taxon>Enterobacteriaceae</taxon>
        <taxon>Escherichia</taxon>
    </lineage>
</organism>
<keyword id="KW-0067">ATP-binding</keyword>
<keyword id="KW-0963">Cytoplasm</keyword>
<keyword id="KW-0227">DNA damage</keyword>
<keyword id="KW-0234">DNA repair</keyword>
<keyword id="KW-0235">DNA replication</keyword>
<keyword id="KW-0238">DNA-binding</keyword>
<keyword id="KW-0547">Nucleotide-binding</keyword>
<keyword id="KW-0742">SOS response</keyword>
<feature type="chain" id="PRO_1000121110" description="DNA replication and repair protein RecF">
    <location>
        <begin position="1"/>
        <end position="357"/>
    </location>
</feature>
<feature type="binding site" evidence="1">
    <location>
        <begin position="30"/>
        <end position="37"/>
    </location>
    <ligand>
        <name>ATP</name>
        <dbReference type="ChEBI" id="CHEBI:30616"/>
    </ligand>
</feature>
<gene>
    <name evidence="1" type="primary">recF</name>
    <name type="ordered locus">ECIAI39_4304</name>
</gene>
<proteinExistence type="inferred from homology"/>